<feature type="chain" id="PRO_1000114806" description="Pyridoxine 5'-phosphate synthase">
    <location>
        <begin position="1"/>
        <end position="240"/>
    </location>
</feature>
<feature type="active site" description="Proton acceptor" evidence="1">
    <location>
        <position position="43"/>
    </location>
</feature>
<feature type="active site" description="Proton acceptor" evidence="1">
    <location>
        <position position="70"/>
    </location>
</feature>
<feature type="active site" description="Proton donor" evidence="1">
    <location>
        <position position="191"/>
    </location>
</feature>
<feature type="binding site" evidence="1">
    <location>
        <position position="7"/>
    </location>
    <ligand>
        <name>3-amino-2-oxopropyl phosphate</name>
        <dbReference type="ChEBI" id="CHEBI:57279"/>
    </ligand>
</feature>
<feature type="binding site" evidence="1">
    <location>
        <begin position="9"/>
        <end position="10"/>
    </location>
    <ligand>
        <name>1-deoxy-D-xylulose 5-phosphate</name>
        <dbReference type="ChEBI" id="CHEBI:57792"/>
    </ligand>
</feature>
<feature type="binding site" evidence="1">
    <location>
        <position position="18"/>
    </location>
    <ligand>
        <name>3-amino-2-oxopropyl phosphate</name>
        <dbReference type="ChEBI" id="CHEBI:57279"/>
    </ligand>
</feature>
<feature type="binding site" evidence="1">
    <location>
        <position position="45"/>
    </location>
    <ligand>
        <name>1-deoxy-D-xylulose 5-phosphate</name>
        <dbReference type="ChEBI" id="CHEBI:57792"/>
    </ligand>
</feature>
<feature type="binding site" evidence="1">
    <location>
        <position position="50"/>
    </location>
    <ligand>
        <name>1-deoxy-D-xylulose 5-phosphate</name>
        <dbReference type="ChEBI" id="CHEBI:57792"/>
    </ligand>
</feature>
<feature type="binding site" evidence="1">
    <location>
        <position position="100"/>
    </location>
    <ligand>
        <name>1-deoxy-D-xylulose 5-phosphate</name>
        <dbReference type="ChEBI" id="CHEBI:57792"/>
    </ligand>
</feature>
<feature type="binding site" evidence="1">
    <location>
        <position position="192"/>
    </location>
    <ligand>
        <name>3-amino-2-oxopropyl phosphate</name>
        <dbReference type="ChEBI" id="CHEBI:57279"/>
    </ligand>
</feature>
<feature type="binding site" evidence="1">
    <location>
        <begin position="213"/>
        <end position="214"/>
    </location>
    <ligand>
        <name>3-amino-2-oxopropyl phosphate</name>
        <dbReference type="ChEBI" id="CHEBI:57279"/>
    </ligand>
</feature>
<feature type="site" description="Transition state stabilizer" evidence="1">
    <location>
        <position position="151"/>
    </location>
</feature>
<organism>
    <name type="scientific">Crocosphaera subtropica (strain ATCC 51142 / BH68)</name>
    <name type="common">Cyanothece sp. (strain ATCC 51142)</name>
    <dbReference type="NCBI Taxonomy" id="43989"/>
    <lineage>
        <taxon>Bacteria</taxon>
        <taxon>Bacillati</taxon>
        <taxon>Cyanobacteriota</taxon>
        <taxon>Cyanophyceae</taxon>
        <taxon>Oscillatoriophycideae</taxon>
        <taxon>Chroococcales</taxon>
        <taxon>Aphanothecaceae</taxon>
        <taxon>Crocosphaera</taxon>
        <taxon>Crocosphaera subtropica</taxon>
    </lineage>
</organism>
<accession>B1WY64</accession>
<protein>
    <recommendedName>
        <fullName evidence="1">Pyridoxine 5'-phosphate synthase</fullName>
        <shortName evidence="1">PNP synthase</shortName>
        <ecNumber evidence="1">2.6.99.2</ecNumber>
    </recommendedName>
</protein>
<gene>
    <name evidence="1" type="primary">pdxJ</name>
    <name type="ordered locus">cce_3300</name>
</gene>
<name>PDXJ_CROS5</name>
<comment type="function">
    <text evidence="1">Catalyzes the complicated ring closure reaction between the two acyclic compounds 1-deoxy-D-xylulose-5-phosphate (DXP) and 3-amino-2-oxopropyl phosphate (1-amino-acetone-3-phosphate or AAP) to form pyridoxine 5'-phosphate (PNP) and inorganic phosphate.</text>
</comment>
<comment type="catalytic activity">
    <reaction evidence="1">
        <text>3-amino-2-oxopropyl phosphate + 1-deoxy-D-xylulose 5-phosphate = pyridoxine 5'-phosphate + phosphate + 2 H2O + H(+)</text>
        <dbReference type="Rhea" id="RHEA:15265"/>
        <dbReference type="ChEBI" id="CHEBI:15377"/>
        <dbReference type="ChEBI" id="CHEBI:15378"/>
        <dbReference type="ChEBI" id="CHEBI:43474"/>
        <dbReference type="ChEBI" id="CHEBI:57279"/>
        <dbReference type="ChEBI" id="CHEBI:57792"/>
        <dbReference type="ChEBI" id="CHEBI:58589"/>
        <dbReference type="EC" id="2.6.99.2"/>
    </reaction>
</comment>
<comment type="pathway">
    <text evidence="1">Cofactor biosynthesis; pyridoxine 5'-phosphate biosynthesis; pyridoxine 5'-phosphate from D-erythrose 4-phosphate: step 5/5.</text>
</comment>
<comment type="subunit">
    <text evidence="1">Homooctamer; tetramer of dimers.</text>
</comment>
<comment type="subcellular location">
    <subcellularLocation>
        <location evidence="1">Cytoplasm</location>
    </subcellularLocation>
</comment>
<comment type="similarity">
    <text evidence="1">Belongs to the PNP synthase family.</text>
</comment>
<dbReference type="EC" id="2.6.99.2" evidence="1"/>
<dbReference type="EMBL" id="CP000806">
    <property type="protein sequence ID" value="ACB52648.1"/>
    <property type="molecule type" value="Genomic_DNA"/>
</dbReference>
<dbReference type="RefSeq" id="WP_009547923.1">
    <property type="nucleotide sequence ID" value="NC_010546.1"/>
</dbReference>
<dbReference type="SMR" id="B1WY64"/>
<dbReference type="STRING" id="43989.cce_3300"/>
<dbReference type="KEGG" id="cyt:cce_3300"/>
<dbReference type="eggNOG" id="COG0854">
    <property type="taxonomic scope" value="Bacteria"/>
</dbReference>
<dbReference type="HOGENOM" id="CLU_074563_0_0_3"/>
<dbReference type="OrthoDB" id="9806590at2"/>
<dbReference type="UniPathway" id="UPA00244">
    <property type="reaction ID" value="UER00313"/>
</dbReference>
<dbReference type="Proteomes" id="UP000001203">
    <property type="component" value="Chromosome circular"/>
</dbReference>
<dbReference type="GO" id="GO:0005829">
    <property type="term" value="C:cytosol"/>
    <property type="evidence" value="ECO:0007669"/>
    <property type="project" value="TreeGrafter"/>
</dbReference>
<dbReference type="GO" id="GO:0033856">
    <property type="term" value="F:pyridoxine 5'-phosphate synthase activity"/>
    <property type="evidence" value="ECO:0007669"/>
    <property type="project" value="UniProtKB-EC"/>
</dbReference>
<dbReference type="GO" id="GO:0008615">
    <property type="term" value="P:pyridoxine biosynthetic process"/>
    <property type="evidence" value="ECO:0007669"/>
    <property type="project" value="UniProtKB-UniRule"/>
</dbReference>
<dbReference type="CDD" id="cd00003">
    <property type="entry name" value="PNPsynthase"/>
    <property type="match status" value="1"/>
</dbReference>
<dbReference type="Gene3D" id="3.20.20.70">
    <property type="entry name" value="Aldolase class I"/>
    <property type="match status" value="1"/>
</dbReference>
<dbReference type="HAMAP" id="MF_00279">
    <property type="entry name" value="PdxJ"/>
    <property type="match status" value="1"/>
</dbReference>
<dbReference type="InterPro" id="IPR013785">
    <property type="entry name" value="Aldolase_TIM"/>
</dbReference>
<dbReference type="InterPro" id="IPR004569">
    <property type="entry name" value="PyrdxlP_synth_PdxJ"/>
</dbReference>
<dbReference type="InterPro" id="IPR036130">
    <property type="entry name" value="Pyridoxine-5'_phos_synth"/>
</dbReference>
<dbReference type="NCBIfam" id="TIGR00559">
    <property type="entry name" value="pdxJ"/>
    <property type="match status" value="1"/>
</dbReference>
<dbReference type="NCBIfam" id="NF003623">
    <property type="entry name" value="PRK05265.1-1"/>
    <property type="match status" value="1"/>
</dbReference>
<dbReference type="NCBIfam" id="NF003625">
    <property type="entry name" value="PRK05265.1-3"/>
    <property type="match status" value="1"/>
</dbReference>
<dbReference type="NCBIfam" id="NF003627">
    <property type="entry name" value="PRK05265.1-5"/>
    <property type="match status" value="1"/>
</dbReference>
<dbReference type="PANTHER" id="PTHR30456">
    <property type="entry name" value="PYRIDOXINE 5'-PHOSPHATE SYNTHASE"/>
    <property type="match status" value="1"/>
</dbReference>
<dbReference type="PANTHER" id="PTHR30456:SF0">
    <property type="entry name" value="PYRIDOXINE 5'-PHOSPHATE SYNTHASE"/>
    <property type="match status" value="1"/>
</dbReference>
<dbReference type="Pfam" id="PF03740">
    <property type="entry name" value="PdxJ"/>
    <property type="match status" value="1"/>
</dbReference>
<dbReference type="SUPFAM" id="SSF63892">
    <property type="entry name" value="Pyridoxine 5'-phosphate synthase"/>
    <property type="match status" value="1"/>
</dbReference>
<reference key="1">
    <citation type="journal article" date="2008" name="Proc. Natl. Acad. Sci. U.S.A.">
        <title>The genome of Cyanothece 51142, a unicellular diazotrophic cyanobacterium important in the marine nitrogen cycle.</title>
        <authorList>
            <person name="Welsh E.A."/>
            <person name="Liberton M."/>
            <person name="Stoeckel J."/>
            <person name="Loh T."/>
            <person name="Elvitigala T."/>
            <person name="Wang C."/>
            <person name="Wollam A."/>
            <person name="Fulton R.S."/>
            <person name="Clifton S.W."/>
            <person name="Jacobs J.M."/>
            <person name="Aurora R."/>
            <person name="Ghosh B.K."/>
            <person name="Sherman L.A."/>
            <person name="Smith R.D."/>
            <person name="Wilson R.K."/>
            <person name="Pakrasi H.B."/>
        </authorList>
    </citation>
    <scope>NUCLEOTIDE SEQUENCE [LARGE SCALE GENOMIC DNA]</scope>
    <source>
        <strain>ATCC 51142 / BH68</strain>
    </source>
</reference>
<evidence type="ECO:0000255" key="1">
    <source>
        <dbReference type="HAMAP-Rule" id="MF_00279"/>
    </source>
</evidence>
<sequence length="240" mass="26344">MLTLGVNIDHVATIRQARRTVEPDPVAAAVLAELGGANGITAHLREDRRHMQDRDIRILRETVRTHLNLEMAATEEMVAIALDIKPDYVTLVPEKREEVTTEGGLDIAGSLEKLKNVVDRLQSANIPVSLFIDADEAQIKASAETQAKFIELHTGKYADAPNAEIRQKELESLKLGCEQALSLGLRVNAGHGLTYINVYPVACLPGMEELNIGHTIVSRAVLVGMERAVREMKLAMRGEL</sequence>
<proteinExistence type="inferred from homology"/>
<keyword id="KW-0963">Cytoplasm</keyword>
<keyword id="KW-0664">Pyridoxine biosynthesis</keyword>
<keyword id="KW-1185">Reference proteome</keyword>
<keyword id="KW-0808">Transferase</keyword>